<evidence type="ECO:0000255" key="1">
    <source>
        <dbReference type="HAMAP-Rule" id="MF_01320"/>
    </source>
</evidence>
<evidence type="ECO:0000256" key="2">
    <source>
        <dbReference type="SAM" id="MobiDB-lite"/>
    </source>
</evidence>
<evidence type="ECO:0000305" key="3"/>
<feature type="chain" id="PRO_0000309974" description="Large ribosomal subunit protein uL2">
    <location>
        <begin position="1"/>
        <end position="274"/>
    </location>
</feature>
<feature type="region of interest" description="Disordered" evidence="2">
    <location>
        <begin position="200"/>
        <end position="274"/>
    </location>
</feature>
<feature type="compositionally biased region" description="Basic residues" evidence="2">
    <location>
        <begin position="207"/>
        <end position="220"/>
    </location>
</feature>
<feature type="compositionally biased region" description="Basic residues" evidence="2">
    <location>
        <begin position="255"/>
        <end position="274"/>
    </location>
</feature>
<dbReference type="EMBL" id="CP000140">
    <property type="protein sequence ID" value="ABR44102.1"/>
    <property type="molecule type" value="Genomic_DNA"/>
</dbReference>
<dbReference type="RefSeq" id="WP_005853970.1">
    <property type="nucleotide sequence ID" value="NZ_LR215978.1"/>
</dbReference>
<dbReference type="SMR" id="A6LEI8"/>
<dbReference type="STRING" id="435591.BDI_2377"/>
<dbReference type="PaxDb" id="435591-BDI_2377"/>
<dbReference type="GeneID" id="93522370"/>
<dbReference type="KEGG" id="pdi:BDI_2377"/>
<dbReference type="eggNOG" id="COG0090">
    <property type="taxonomic scope" value="Bacteria"/>
</dbReference>
<dbReference type="HOGENOM" id="CLU_036235_2_1_10"/>
<dbReference type="BioCyc" id="PDIS435591:G1G5A-2442-MONOMER"/>
<dbReference type="Proteomes" id="UP000000566">
    <property type="component" value="Chromosome"/>
</dbReference>
<dbReference type="GO" id="GO:0015934">
    <property type="term" value="C:large ribosomal subunit"/>
    <property type="evidence" value="ECO:0007669"/>
    <property type="project" value="InterPro"/>
</dbReference>
<dbReference type="GO" id="GO:0019843">
    <property type="term" value="F:rRNA binding"/>
    <property type="evidence" value="ECO:0007669"/>
    <property type="project" value="UniProtKB-UniRule"/>
</dbReference>
<dbReference type="GO" id="GO:0003735">
    <property type="term" value="F:structural constituent of ribosome"/>
    <property type="evidence" value="ECO:0007669"/>
    <property type="project" value="InterPro"/>
</dbReference>
<dbReference type="GO" id="GO:0016740">
    <property type="term" value="F:transferase activity"/>
    <property type="evidence" value="ECO:0007669"/>
    <property type="project" value="InterPro"/>
</dbReference>
<dbReference type="GO" id="GO:0002181">
    <property type="term" value="P:cytoplasmic translation"/>
    <property type="evidence" value="ECO:0007669"/>
    <property type="project" value="TreeGrafter"/>
</dbReference>
<dbReference type="FunFam" id="2.30.30.30:FF:000001">
    <property type="entry name" value="50S ribosomal protein L2"/>
    <property type="match status" value="1"/>
</dbReference>
<dbReference type="FunFam" id="2.40.50.140:FF:000003">
    <property type="entry name" value="50S ribosomal protein L2"/>
    <property type="match status" value="1"/>
</dbReference>
<dbReference type="FunFam" id="4.10.950.10:FF:000001">
    <property type="entry name" value="50S ribosomal protein L2"/>
    <property type="match status" value="1"/>
</dbReference>
<dbReference type="Gene3D" id="2.30.30.30">
    <property type="match status" value="1"/>
</dbReference>
<dbReference type="Gene3D" id="2.40.50.140">
    <property type="entry name" value="Nucleic acid-binding proteins"/>
    <property type="match status" value="1"/>
</dbReference>
<dbReference type="Gene3D" id="4.10.950.10">
    <property type="entry name" value="Ribosomal protein L2, domain 3"/>
    <property type="match status" value="1"/>
</dbReference>
<dbReference type="HAMAP" id="MF_01320_B">
    <property type="entry name" value="Ribosomal_uL2_B"/>
    <property type="match status" value="1"/>
</dbReference>
<dbReference type="InterPro" id="IPR012340">
    <property type="entry name" value="NA-bd_OB-fold"/>
</dbReference>
<dbReference type="InterPro" id="IPR014722">
    <property type="entry name" value="Rib_uL2_dom2"/>
</dbReference>
<dbReference type="InterPro" id="IPR002171">
    <property type="entry name" value="Ribosomal_uL2"/>
</dbReference>
<dbReference type="InterPro" id="IPR005880">
    <property type="entry name" value="Ribosomal_uL2_bac/org-type"/>
</dbReference>
<dbReference type="InterPro" id="IPR022669">
    <property type="entry name" value="Ribosomal_uL2_C"/>
</dbReference>
<dbReference type="InterPro" id="IPR022671">
    <property type="entry name" value="Ribosomal_uL2_CS"/>
</dbReference>
<dbReference type="InterPro" id="IPR014726">
    <property type="entry name" value="Ribosomal_uL2_dom3"/>
</dbReference>
<dbReference type="InterPro" id="IPR022666">
    <property type="entry name" value="Ribosomal_uL2_RNA-bd_dom"/>
</dbReference>
<dbReference type="InterPro" id="IPR008991">
    <property type="entry name" value="Translation_prot_SH3-like_sf"/>
</dbReference>
<dbReference type="NCBIfam" id="TIGR01171">
    <property type="entry name" value="rplB_bact"/>
    <property type="match status" value="1"/>
</dbReference>
<dbReference type="PANTHER" id="PTHR13691:SF5">
    <property type="entry name" value="LARGE RIBOSOMAL SUBUNIT PROTEIN UL2M"/>
    <property type="match status" value="1"/>
</dbReference>
<dbReference type="PANTHER" id="PTHR13691">
    <property type="entry name" value="RIBOSOMAL PROTEIN L2"/>
    <property type="match status" value="1"/>
</dbReference>
<dbReference type="Pfam" id="PF00181">
    <property type="entry name" value="Ribosomal_L2"/>
    <property type="match status" value="1"/>
</dbReference>
<dbReference type="Pfam" id="PF03947">
    <property type="entry name" value="Ribosomal_L2_C"/>
    <property type="match status" value="1"/>
</dbReference>
<dbReference type="PIRSF" id="PIRSF002158">
    <property type="entry name" value="Ribosomal_L2"/>
    <property type="match status" value="1"/>
</dbReference>
<dbReference type="SMART" id="SM01383">
    <property type="entry name" value="Ribosomal_L2"/>
    <property type="match status" value="1"/>
</dbReference>
<dbReference type="SMART" id="SM01382">
    <property type="entry name" value="Ribosomal_L2_C"/>
    <property type="match status" value="1"/>
</dbReference>
<dbReference type="SUPFAM" id="SSF50249">
    <property type="entry name" value="Nucleic acid-binding proteins"/>
    <property type="match status" value="1"/>
</dbReference>
<dbReference type="SUPFAM" id="SSF50104">
    <property type="entry name" value="Translation proteins SH3-like domain"/>
    <property type="match status" value="1"/>
</dbReference>
<dbReference type="PROSITE" id="PS00467">
    <property type="entry name" value="RIBOSOMAL_L2"/>
    <property type="match status" value="1"/>
</dbReference>
<reference key="1">
    <citation type="journal article" date="2007" name="PLoS Biol.">
        <title>Evolution of symbiotic bacteria in the distal human intestine.</title>
        <authorList>
            <person name="Xu J."/>
            <person name="Mahowald M.A."/>
            <person name="Ley R.E."/>
            <person name="Lozupone C.A."/>
            <person name="Hamady M."/>
            <person name="Martens E.C."/>
            <person name="Henrissat B."/>
            <person name="Coutinho P.M."/>
            <person name="Minx P."/>
            <person name="Latreille P."/>
            <person name="Cordum H."/>
            <person name="Van Brunt A."/>
            <person name="Kim K."/>
            <person name="Fulton R.S."/>
            <person name="Fulton L.A."/>
            <person name="Clifton S.W."/>
            <person name="Wilson R.K."/>
            <person name="Knight R.D."/>
            <person name="Gordon J.I."/>
        </authorList>
    </citation>
    <scope>NUCLEOTIDE SEQUENCE [LARGE SCALE GENOMIC DNA]</scope>
    <source>
        <strain>ATCC 8503 / DSM 20701 / CIP 104284 / JCM 5825 / NCTC 11152</strain>
    </source>
</reference>
<gene>
    <name evidence="1" type="primary">rplB</name>
    <name type="ordered locus">BDI_2377</name>
</gene>
<proteinExistence type="inferred from homology"/>
<keyword id="KW-1185">Reference proteome</keyword>
<keyword id="KW-0687">Ribonucleoprotein</keyword>
<keyword id="KW-0689">Ribosomal protein</keyword>
<keyword id="KW-0694">RNA-binding</keyword>
<keyword id="KW-0699">rRNA-binding</keyword>
<organism>
    <name type="scientific">Parabacteroides distasonis (strain ATCC 8503 / DSM 20701 / CIP 104284 / JCM 5825 / NCTC 11152)</name>
    <dbReference type="NCBI Taxonomy" id="435591"/>
    <lineage>
        <taxon>Bacteria</taxon>
        <taxon>Pseudomonadati</taxon>
        <taxon>Bacteroidota</taxon>
        <taxon>Bacteroidia</taxon>
        <taxon>Bacteroidales</taxon>
        <taxon>Tannerellaceae</taxon>
        <taxon>Parabacteroides</taxon>
    </lineage>
</organism>
<comment type="function">
    <text evidence="1">One of the primary rRNA binding proteins. Required for association of the 30S and 50S subunits to form the 70S ribosome, for tRNA binding and peptide bond formation. It has been suggested to have peptidyltransferase activity; this is somewhat controversial. Makes several contacts with the 16S rRNA in the 70S ribosome.</text>
</comment>
<comment type="subunit">
    <text evidence="1">Part of the 50S ribosomal subunit. Forms a bridge to the 30S subunit in the 70S ribosome.</text>
</comment>
<comment type="similarity">
    <text evidence="1">Belongs to the universal ribosomal protein uL2 family.</text>
</comment>
<accession>A6LEI8</accession>
<name>RL2_PARD8</name>
<sequence length="274" mass="29437">MGIRKLKPTTPGQRHKVIGAFDKITASTPEKSLVVGKKSTGGRNNTGKMTMRYIGGGHKQKYRIIDFKRNKDGIPATVKSIEYDPNRSSRIALLYYADGAKSYIIAPNGLEVGQTVVSGSDAAPEVGNTLPMANIPVGTIIHNIELRPGQGAKMVRSAGAFAQLTSKEGAYAIIKMPSGETRKILAACKATIGAVGNSDHALEKSGKAGRSRWLGRRPRNRGVVMNPVDHPMGGGEGRSSGGHPRSRNGLYAKGLKTRAPKKHSSKYIIERRKK</sequence>
<protein>
    <recommendedName>
        <fullName evidence="1">Large ribosomal subunit protein uL2</fullName>
    </recommendedName>
    <alternativeName>
        <fullName evidence="3">50S ribosomal protein L2</fullName>
    </alternativeName>
</protein>